<accession>A9IS46</accession>
<keyword id="KW-0963">Cytoplasm</keyword>
<keyword id="KW-0448">Lipopolysaccharide biosynthesis</keyword>
<keyword id="KW-0808">Transferase</keyword>
<evidence type="ECO:0000255" key="1">
    <source>
        <dbReference type="HAMAP-Rule" id="MF_00056"/>
    </source>
</evidence>
<name>KDSA_BART1</name>
<sequence>MTKPNARVKVGNIIFSNEMPLSLIAGPCQMESRDHAFEMAGRIKTMTDQLGIGFVYKSSYDKANRTSLSAARGIGLEKAMAIFSDLKKEFDCPILTDVHTEEQCTIVSSTVDILQIPAFLCRQTDLLVAAAKTGCVVNIKKGQFLAPWDMENVLKKVVHSGNPNVMLCERGTSFGYNRLISDMRSLPILRSFGAPVIFDATHSVQEPGGQGASSGGQRQFVEVLARAAVSVGVAGIFLETHQDPDHAPSDGPNMIKIDDLQRLIETLMEFDDLSKKLN</sequence>
<reference key="1">
    <citation type="journal article" date="2007" name="Nat. Genet.">
        <title>Genomic analysis of Bartonella identifies type IV secretion systems as host adaptability factors.</title>
        <authorList>
            <person name="Saenz H.L."/>
            <person name="Engel P."/>
            <person name="Stoeckli M.C."/>
            <person name="Lanz C."/>
            <person name="Raddatz G."/>
            <person name="Vayssier-Taussat M."/>
            <person name="Birtles R."/>
            <person name="Schuster S.C."/>
            <person name="Dehio C."/>
        </authorList>
    </citation>
    <scope>NUCLEOTIDE SEQUENCE [LARGE SCALE GENOMIC DNA]</scope>
    <source>
        <strain>CIP 105476 / IBS 506</strain>
    </source>
</reference>
<dbReference type="EC" id="2.5.1.55" evidence="1"/>
<dbReference type="EMBL" id="AM260525">
    <property type="protein sequence ID" value="CAK01261.1"/>
    <property type="molecule type" value="Genomic_DNA"/>
</dbReference>
<dbReference type="RefSeq" id="WP_012231404.1">
    <property type="nucleotide sequence ID" value="NC_010161.1"/>
</dbReference>
<dbReference type="SMR" id="A9IS46"/>
<dbReference type="KEGG" id="btr:BT_0855"/>
<dbReference type="eggNOG" id="COG2877">
    <property type="taxonomic scope" value="Bacteria"/>
</dbReference>
<dbReference type="HOGENOM" id="CLU_036666_0_0_5"/>
<dbReference type="UniPathway" id="UPA00030"/>
<dbReference type="UniPathway" id="UPA00357">
    <property type="reaction ID" value="UER00474"/>
</dbReference>
<dbReference type="Proteomes" id="UP000001592">
    <property type="component" value="Chromosome"/>
</dbReference>
<dbReference type="GO" id="GO:0005737">
    <property type="term" value="C:cytoplasm"/>
    <property type="evidence" value="ECO:0007669"/>
    <property type="project" value="UniProtKB-SubCell"/>
</dbReference>
<dbReference type="GO" id="GO:0008676">
    <property type="term" value="F:3-deoxy-8-phosphooctulonate synthase activity"/>
    <property type="evidence" value="ECO:0007669"/>
    <property type="project" value="UniProtKB-UniRule"/>
</dbReference>
<dbReference type="GO" id="GO:0019294">
    <property type="term" value="P:keto-3-deoxy-D-manno-octulosonic acid biosynthetic process"/>
    <property type="evidence" value="ECO:0007669"/>
    <property type="project" value="UniProtKB-UniRule"/>
</dbReference>
<dbReference type="Gene3D" id="3.20.20.70">
    <property type="entry name" value="Aldolase class I"/>
    <property type="match status" value="1"/>
</dbReference>
<dbReference type="HAMAP" id="MF_00056">
    <property type="entry name" value="KDO8P_synth"/>
    <property type="match status" value="1"/>
</dbReference>
<dbReference type="InterPro" id="IPR013785">
    <property type="entry name" value="Aldolase_TIM"/>
</dbReference>
<dbReference type="InterPro" id="IPR006218">
    <property type="entry name" value="DAHP1/KDSA"/>
</dbReference>
<dbReference type="InterPro" id="IPR006269">
    <property type="entry name" value="KDO8P_synthase"/>
</dbReference>
<dbReference type="NCBIfam" id="TIGR01362">
    <property type="entry name" value="KDO8P_synth"/>
    <property type="match status" value="1"/>
</dbReference>
<dbReference type="NCBIfam" id="NF003543">
    <property type="entry name" value="PRK05198.1"/>
    <property type="match status" value="1"/>
</dbReference>
<dbReference type="PANTHER" id="PTHR21057">
    <property type="entry name" value="PHOSPHO-2-DEHYDRO-3-DEOXYHEPTONATE ALDOLASE"/>
    <property type="match status" value="1"/>
</dbReference>
<dbReference type="Pfam" id="PF00793">
    <property type="entry name" value="DAHP_synth_1"/>
    <property type="match status" value="1"/>
</dbReference>
<dbReference type="SUPFAM" id="SSF51569">
    <property type="entry name" value="Aldolase"/>
    <property type="match status" value="1"/>
</dbReference>
<comment type="catalytic activity">
    <reaction evidence="1">
        <text>D-arabinose 5-phosphate + phosphoenolpyruvate + H2O = 3-deoxy-alpha-D-manno-2-octulosonate-8-phosphate + phosphate</text>
        <dbReference type="Rhea" id="RHEA:14053"/>
        <dbReference type="ChEBI" id="CHEBI:15377"/>
        <dbReference type="ChEBI" id="CHEBI:43474"/>
        <dbReference type="ChEBI" id="CHEBI:57693"/>
        <dbReference type="ChEBI" id="CHEBI:58702"/>
        <dbReference type="ChEBI" id="CHEBI:85985"/>
        <dbReference type="EC" id="2.5.1.55"/>
    </reaction>
</comment>
<comment type="pathway">
    <text evidence="1">Carbohydrate biosynthesis; 3-deoxy-D-manno-octulosonate biosynthesis; 3-deoxy-D-manno-octulosonate from D-ribulose 5-phosphate: step 2/3.</text>
</comment>
<comment type="pathway">
    <text evidence="1">Bacterial outer membrane biogenesis; lipopolysaccharide biosynthesis.</text>
</comment>
<comment type="subcellular location">
    <subcellularLocation>
        <location evidence="1">Cytoplasm</location>
    </subcellularLocation>
</comment>
<comment type="similarity">
    <text evidence="1">Belongs to the KdsA family.</text>
</comment>
<protein>
    <recommendedName>
        <fullName evidence="1">2-dehydro-3-deoxyphosphooctonate aldolase</fullName>
        <ecNumber evidence="1">2.5.1.55</ecNumber>
    </recommendedName>
    <alternativeName>
        <fullName evidence="1">3-deoxy-D-manno-octulosonic acid 8-phosphate synthase</fullName>
    </alternativeName>
    <alternativeName>
        <fullName evidence="1">KDO-8-phosphate synthase</fullName>
        <shortName evidence="1">KDO 8-P synthase</shortName>
        <shortName evidence="1">KDOPS</shortName>
    </alternativeName>
    <alternativeName>
        <fullName evidence="1">Phospho-2-dehydro-3-deoxyoctonate aldolase</fullName>
    </alternativeName>
</protein>
<organism>
    <name type="scientific">Bartonella tribocorum (strain CIP 105476 / IBS 506)</name>
    <dbReference type="NCBI Taxonomy" id="382640"/>
    <lineage>
        <taxon>Bacteria</taxon>
        <taxon>Pseudomonadati</taxon>
        <taxon>Pseudomonadota</taxon>
        <taxon>Alphaproteobacteria</taxon>
        <taxon>Hyphomicrobiales</taxon>
        <taxon>Bartonellaceae</taxon>
        <taxon>Bartonella</taxon>
    </lineage>
</organism>
<gene>
    <name evidence="1" type="primary">kdsA</name>
    <name type="ordered locus">BT_0855</name>
</gene>
<proteinExistence type="inferred from homology"/>
<feature type="chain" id="PRO_1000074979" description="2-dehydro-3-deoxyphosphooctonate aldolase">
    <location>
        <begin position="1"/>
        <end position="278"/>
    </location>
</feature>